<feature type="chain" id="PRO_1000166382" description="Large ribosomal subunit protein uL16">
    <location>
        <begin position="1"/>
        <end position="137"/>
    </location>
</feature>
<proteinExistence type="inferred from homology"/>
<sequence length="137" mass="15404">MLVPKRVKHRREFRGKMRGEAKGGKEVSFGEYGLQATTSSWITNRQIEAARIAMTRYMKRGGKVWIKIFPHKSYTAKAIGVRMGSGKGAPEGWVSPVKRGKVMFEIAGVSEEVAREAFRLAGHKLPVKVKFVKREAE</sequence>
<dbReference type="EMBL" id="AM946015">
    <property type="protein sequence ID" value="CAR40451.1"/>
    <property type="molecule type" value="Genomic_DNA"/>
</dbReference>
<dbReference type="RefSeq" id="WP_003086024.1">
    <property type="nucleotide sequence ID" value="NC_012004.1"/>
</dbReference>
<dbReference type="SMR" id="B9DSV7"/>
<dbReference type="STRING" id="218495.SUB0075"/>
<dbReference type="GeneID" id="93825301"/>
<dbReference type="KEGG" id="sub:SUB0075"/>
<dbReference type="eggNOG" id="COG0197">
    <property type="taxonomic scope" value="Bacteria"/>
</dbReference>
<dbReference type="HOGENOM" id="CLU_078858_2_1_9"/>
<dbReference type="OrthoDB" id="9802589at2"/>
<dbReference type="Proteomes" id="UP000000449">
    <property type="component" value="Chromosome"/>
</dbReference>
<dbReference type="GO" id="GO:0022625">
    <property type="term" value="C:cytosolic large ribosomal subunit"/>
    <property type="evidence" value="ECO:0007669"/>
    <property type="project" value="TreeGrafter"/>
</dbReference>
<dbReference type="GO" id="GO:0019843">
    <property type="term" value="F:rRNA binding"/>
    <property type="evidence" value="ECO:0007669"/>
    <property type="project" value="UniProtKB-UniRule"/>
</dbReference>
<dbReference type="GO" id="GO:0003735">
    <property type="term" value="F:structural constituent of ribosome"/>
    <property type="evidence" value="ECO:0007669"/>
    <property type="project" value="InterPro"/>
</dbReference>
<dbReference type="GO" id="GO:0000049">
    <property type="term" value="F:tRNA binding"/>
    <property type="evidence" value="ECO:0007669"/>
    <property type="project" value="UniProtKB-KW"/>
</dbReference>
<dbReference type="GO" id="GO:0006412">
    <property type="term" value="P:translation"/>
    <property type="evidence" value="ECO:0007669"/>
    <property type="project" value="UniProtKB-UniRule"/>
</dbReference>
<dbReference type="CDD" id="cd01433">
    <property type="entry name" value="Ribosomal_L16_L10e"/>
    <property type="match status" value="1"/>
</dbReference>
<dbReference type="FunFam" id="3.90.1170.10:FF:000001">
    <property type="entry name" value="50S ribosomal protein L16"/>
    <property type="match status" value="1"/>
</dbReference>
<dbReference type="Gene3D" id="3.90.1170.10">
    <property type="entry name" value="Ribosomal protein L10e/L16"/>
    <property type="match status" value="1"/>
</dbReference>
<dbReference type="HAMAP" id="MF_01342">
    <property type="entry name" value="Ribosomal_uL16"/>
    <property type="match status" value="1"/>
</dbReference>
<dbReference type="InterPro" id="IPR047873">
    <property type="entry name" value="Ribosomal_uL16"/>
</dbReference>
<dbReference type="InterPro" id="IPR000114">
    <property type="entry name" value="Ribosomal_uL16_bact-type"/>
</dbReference>
<dbReference type="InterPro" id="IPR020798">
    <property type="entry name" value="Ribosomal_uL16_CS"/>
</dbReference>
<dbReference type="InterPro" id="IPR016180">
    <property type="entry name" value="Ribosomal_uL16_dom"/>
</dbReference>
<dbReference type="InterPro" id="IPR036920">
    <property type="entry name" value="Ribosomal_uL16_sf"/>
</dbReference>
<dbReference type="NCBIfam" id="TIGR01164">
    <property type="entry name" value="rplP_bact"/>
    <property type="match status" value="1"/>
</dbReference>
<dbReference type="PANTHER" id="PTHR12220">
    <property type="entry name" value="50S/60S RIBOSOMAL PROTEIN L16"/>
    <property type="match status" value="1"/>
</dbReference>
<dbReference type="PANTHER" id="PTHR12220:SF13">
    <property type="entry name" value="LARGE RIBOSOMAL SUBUNIT PROTEIN UL16M"/>
    <property type="match status" value="1"/>
</dbReference>
<dbReference type="Pfam" id="PF00252">
    <property type="entry name" value="Ribosomal_L16"/>
    <property type="match status" value="1"/>
</dbReference>
<dbReference type="PRINTS" id="PR00060">
    <property type="entry name" value="RIBOSOMALL16"/>
</dbReference>
<dbReference type="SUPFAM" id="SSF54686">
    <property type="entry name" value="Ribosomal protein L16p/L10e"/>
    <property type="match status" value="1"/>
</dbReference>
<dbReference type="PROSITE" id="PS00586">
    <property type="entry name" value="RIBOSOMAL_L16_1"/>
    <property type="match status" value="1"/>
</dbReference>
<dbReference type="PROSITE" id="PS00701">
    <property type="entry name" value="RIBOSOMAL_L16_2"/>
    <property type="match status" value="1"/>
</dbReference>
<reference key="1">
    <citation type="journal article" date="2009" name="BMC Genomics">
        <title>Evidence for niche adaptation in the genome of the bovine pathogen Streptococcus uberis.</title>
        <authorList>
            <person name="Ward P.N."/>
            <person name="Holden M.T.G."/>
            <person name="Leigh J.A."/>
            <person name="Lennard N."/>
            <person name="Bignell A."/>
            <person name="Barron A."/>
            <person name="Clark L."/>
            <person name="Quail M.A."/>
            <person name="Woodward J."/>
            <person name="Barrell B.G."/>
            <person name="Egan S.A."/>
            <person name="Field T.R."/>
            <person name="Maskell D."/>
            <person name="Kehoe M."/>
            <person name="Dowson C.G."/>
            <person name="Chanter N."/>
            <person name="Whatmore A.M."/>
            <person name="Bentley S.D."/>
            <person name="Parkhill J."/>
        </authorList>
    </citation>
    <scope>NUCLEOTIDE SEQUENCE [LARGE SCALE GENOMIC DNA]</scope>
    <source>
        <strain>ATCC BAA-854 / 0140J</strain>
    </source>
</reference>
<name>RL16_STRU0</name>
<protein>
    <recommendedName>
        <fullName evidence="1">Large ribosomal subunit protein uL16</fullName>
    </recommendedName>
    <alternativeName>
        <fullName evidence="2">50S ribosomal protein L16</fullName>
    </alternativeName>
</protein>
<comment type="function">
    <text evidence="1">Binds 23S rRNA and is also seen to make contacts with the A and possibly P site tRNAs.</text>
</comment>
<comment type="subunit">
    <text evidence="1">Part of the 50S ribosomal subunit.</text>
</comment>
<comment type="similarity">
    <text evidence="1">Belongs to the universal ribosomal protein uL16 family.</text>
</comment>
<evidence type="ECO:0000255" key="1">
    <source>
        <dbReference type="HAMAP-Rule" id="MF_01342"/>
    </source>
</evidence>
<evidence type="ECO:0000305" key="2"/>
<gene>
    <name evidence="1" type="primary">rplP</name>
    <name type="ordered locus">SUB0075</name>
</gene>
<accession>B9DSV7</accession>
<organism>
    <name type="scientific">Streptococcus uberis (strain ATCC BAA-854 / 0140J)</name>
    <dbReference type="NCBI Taxonomy" id="218495"/>
    <lineage>
        <taxon>Bacteria</taxon>
        <taxon>Bacillati</taxon>
        <taxon>Bacillota</taxon>
        <taxon>Bacilli</taxon>
        <taxon>Lactobacillales</taxon>
        <taxon>Streptococcaceae</taxon>
        <taxon>Streptococcus</taxon>
    </lineage>
</organism>
<keyword id="KW-1185">Reference proteome</keyword>
<keyword id="KW-0687">Ribonucleoprotein</keyword>
<keyword id="KW-0689">Ribosomal protein</keyword>
<keyword id="KW-0694">RNA-binding</keyword>
<keyword id="KW-0699">rRNA-binding</keyword>
<keyword id="KW-0820">tRNA-binding</keyword>